<protein>
    <recommendedName>
        <fullName evidence="1">Histidine--tRNA ligase</fullName>
        <ecNumber evidence="1">6.1.1.21</ecNumber>
    </recommendedName>
    <alternativeName>
        <fullName evidence="1">Histidyl-tRNA synthetase</fullName>
        <shortName evidence="1">HisRS</shortName>
    </alternativeName>
</protein>
<reference key="1">
    <citation type="submission" date="2008-04" db="EMBL/GenBank/DDBJ databases">
        <title>Complete sequence of chromosome of Natranaerobius thermophilus JW/NM-WN-LF.</title>
        <authorList>
            <consortium name="US DOE Joint Genome Institute"/>
            <person name="Copeland A."/>
            <person name="Lucas S."/>
            <person name="Lapidus A."/>
            <person name="Glavina del Rio T."/>
            <person name="Dalin E."/>
            <person name="Tice H."/>
            <person name="Bruce D."/>
            <person name="Goodwin L."/>
            <person name="Pitluck S."/>
            <person name="Chertkov O."/>
            <person name="Brettin T."/>
            <person name="Detter J.C."/>
            <person name="Han C."/>
            <person name="Kuske C.R."/>
            <person name="Schmutz J."/>
            <person name="Larimer F."/>
            <person name="Land M."/>
            <person name="Hauser L."/>
            <person name="Kyrpides N."/>
            <person name="Lykidis A."/>
            <person name="Mesbah N.M."/>
            <person name="Wiegel J."/>
        </authorList>
    </citation>
    <scope>NUCLEOTIDE SEQUENCE [LARGE SCALE GENOMIC DNA]</scope>
    <source>
        <strain>ATCC BAA-1301 / DSM 18059 / JW/NM-WN-LF</strain>
    </source>
</reference>
<proteinExistence type="inferred from homology"/>
<accession>B2A2F9</accession>
<gene>
    <name evidence="1" type="primary">hisS</name>
    <name type="ordered locus">Nther_1291</name>
</gene>
<comment type="catalytic activity">
    <reaction evidence="1">
        <text>tRNA(His) + L-histidine + ATP = L-histidyl-tRNA(His) + AMP + diphosphate + H(+)</text>
        <dbReference type="Rhea" id="RHEA:17313"/>
        <dbReference type="Rhea" id="RHEA-COMP:9665"/>
        <dbReference type="Rhea" id="RHEA-COMP:9689"/>
        <dbReference type="ChEBI" id="CHEBI:15378"/>
        <dbReference type="ChEBI" id="CHEBI:30616"/>
        <dbReference type="ChEBI" id="CHEBI:33019"/>
        <dbReference type="ChEBI" id="CHEBI:57595"/>
        <dbReference type="ChEBI" id="CHEBI:78442"/>
        <dbReference type="ChEBI" id="CHEBI:78527"/>
        <dbReference type="ChEBI" id="CHEBI:456215"/>
        <dbReference type="EC" id="6.1.1.21"/>
    </reaction>
</comment>
<comment type="subunit">
    <text evidence="1">Homodimer.</text>
</comment>
<comment type="subcellular location">
    <subcellularLocation>
        <location evidence="1">Cytoplasm</location>
    </subcellularLocation>
</comment>
<comment type="similarity">
    <text evidence="1">Belongs to the class-II aminoacyl-tRNA synthetase family.</text>
</comment>
<feature type="chain" id="PRO_1000095573" description="Histidine--tRNA ligase">
    <location>
        <begin position="1"/>
        <end position="421"/>
    </location>
</feature>
<sequence>MLTKAPRGTKDILPQESSKWHALEETAKKISNLYGFNEVRFPIFEHTELFTRSVGETSDIVSKEMYTFTDRGDRSLTLRPEGTAPAARLYVEHKLFNEPQPVKYYYIGPMFRYDRPQAGRYRQFHQFGVEVFGSLEPETDVEVMKLLLDYFEALGLSGLELKLNSVGCKECRQKYLNELSNYFEGKIDHICQDCYQRYQTNPMRVLDCKKKSCREAIGEDVPLIVNYLCQDCATHFDKVKEILTSLNLPYQIDPHLVRGLDYYTKTAFEVVMPSLGAQDALGGGGRYDYLVEECGGPPTPGVGFAVGLERILLALEQKEINLDQEEKLDFYFIATGEEAKQEAFKLLATVREEGYSAVMDFERRSMRAQMKRANKANARFSLILGEAELNEQTCQIKDMEAGEQFQVPLKSFEERIKEIAG</sequence>
<name>SYH_NATTJ</name>
<evidence type="ECO:0000255" key="1">
    <source>
        <dbReference type="HAMAP-Rule" id="MF_00127"/>
    </source>
</evidence>
<organism>
    <name type="scientific">Natranaerobius thermophilus (strain ATCC BAA-1301 / DSM 18059 / JW/NM-WN-LF)</name>
    <dbReference type="NCBI Taxonomy" id="457570"/>
    <lineage>
        <taxon>Bacteria</taxon>
        <taxon>Bacillati</taxon>
        <taxon>Bacillota</taxon>
        <taxon>Clostridia</taxon>
        <taxon>Natranaerobiales</taxon>
        <taxon>Natranaerobiaceae</taxon>
        <taxon>Natranaerobius</taxon>
    </lineage>
</organism>
<keyword id="KW-0030">Aminoacyl-tRNA synthetase</keyword>
<keyword id="KW-0067">ATP-binding</keyword>
<keyword id="KW-0963">Cytoplasm</keyword>
<keyword id="KW-0436">Ligase</keyword>
<keyword id="KW-0547">Nucleotide-binding</keyword>
<keyword id="KW-0648">Protein biosynthesis</keyword>
<keyword id="KW-1185">Reference proteome</keyword>
<dbReference type="EC" id="6.1.1.21" evidence="1"/>
<dbReference type="EMBL" id="CP001034">
    <property type="protein sequence ID" value="ACB84874.1"/>
    <property type="molecule type" value="Genomic_DNA"/>
</dbReference>
<dbReference type="RefSeq" id="WP_012447749.1">
    <property type="nucleotide sequence ID" value="NC_010718.1"/>
</dbReference>
<dbReference type="SMR" id="B2A2F9"/>
<dbReference type="FunCoup" id="B2A2F9">
    <property type="interactions" value="409"/>
</dbReference>
<dbReference type="STRING" id="457570.Nther_1291"/>
<dbReference type="KEGG" id="nth:Nther_1291"/>
<dbReference type="eggNOG" id="COG0124">
    <property type="taxonomic scope" value="Bacteria"/>
</dbReference>
<dbReference type="HOGENOM" id="CLU_025113_1_1_9"/>
<dbReference type="InParanoid" id="B2A2F9"/>
<dbReference type="OrthoDB" id="9800814at2"/>
<dbReference type="Proteomes" id="UP000001683">
    <property type="component" value="Chromosome"/>
</dbReference>
<dbReference type="GO" id="GO:0005737">
    <property type="term" value="C:cytoplasm"/>
    <property type="evidence" value="ECO:0007669"/>
    <property type="project" value="UniProtKB-SubCell"/>
</dbReference>
<dbReference type="GO" id="GO:0005524">
    <property type="term" value="F:ATP binding"/>
    <property type="evidence" value="ECO:0007669"/>
    <property type="project" value="UniProtKB-UniRule"/>
</dbReference>
<dbReference type="GO" id="GO:0140096">
    <property type="term" value="F:catalytic activity, acting on a protein"/>
    <property type="evidence" value="ECO:0007669"/>
    <property type="project" value="UniProtKB-ARBA"/>
</dbReference>
<dbReference type="GO" id="GO:0004821">
    <property type="term" value="F:histidine-tRNA ligase activity"/>
    <property type="evidence" value="ECO:0007669"/>
    <property type="project" value="UniProtKB-UniRule"/>
</dbReference>
<dbReference type="GO" id="GO:0016740">
    <property type="term" value="F:transferase activity"/>
    <property type="evidence" value="ECO:0007669"/>
    <property type="project" value="UniProtKB-ARBA"/>
</dbReference>
<dbReference type="GO" id="GO:0006427">
    <property type="term" value="P:histidyl-tRNA aminoacylation"/>
    <property type="evidence" value="ECO:0007669"/>
    <property type="project" value="UniProtKB-UniRule"/>
</dbReference>
<dbReference type="CDD" id="cd00773">
    <property type="entry name" value="HisRS-like_core"/>
    <property type="match status" value="1"/>
</dbReference>
<dbReference type="CDD" id="cd00859">
    <property type="entry name" value="HisRS_anticodon"/>
    <property type="match status" value="1"/>
</dbReference>
<dbReference type="FunFam" id="3.30.930.10:FF:000005">
    <property type="entry name" value="Histidine--tRNA ligase"/>
    <property type="match status" value="1"/>
</dbReference>
<dbReference type="Gene3D" id="3.40.50.800">
    <property type="entry name" value="Anticodon-binding domain"/>
    <property type="match status" value="1"/>
</dbReference>
<dbReference type="Gene3D" id="3.30.930.10">
    <property type="entry name" value="Bira Bifunctional Protein, Domain 2"/>
    <property type="match status" value="1"/>
</dbReference>
<dbReference type="HAMAP" id="MF_00127">
    <property type="entry name" value="His_tRNA_synth"/>
    <property type="match status" value="1"/>
</dbReference>
<dbReference type="InterPro" id="IPR006195">
    <property type="entry name" value="aa-tRNA-synth_II"/>
</dbReference>
<dbReference type="InterPro" id="IPR045864">
    <property type="entry name" value="aa-tRNA-synth_II/BPL/LPL"/>
</dbReference>
<dbReference type="InterPro" id="IPR004154">
    <property type="entry name" value="Anticodon-bd"/>
</dbReference>
<dbReference type="InterPro" id="IPR036621">
    <property type="entry name" value="Anticodon-bd_dom_sf"/>
</dbReference>
<dbReference type="InterPro" id="IPR015807">
    <property type="entry name" value="His-tRNA-ligase"/>
</dbReference>
<dbReference type="InterPro" id="IPR041715">
    <property type="entry name" value="HisRS-like_core"/>
</dbReference>
<dbReference type="InterPro" id="IPR004516">
    <property type="entry name" value="HisRS/HisZ"/>
</dbReference>
<dbReference type="InterPro" id="IPR033656">
    <property type="entry name" value="HisRS_anticodon"/>
</dbReference>
<dbReference type="NCBIfam" id="TIGR00442">
    <property type="entry name" value="hisS"/>
    <property type="match status" value="1"/>
</dbReference>
<dbReference type="PANTHER" id="PTHR43707:SF1">
    <property type="entry name" value="HISTIDINE--TRNA LIGASE, MITOCHONDRIAL-RELATED"/>
    <property type="match status" value="1"/>
</dbReference>
<dbReference type="PANTHER" id="PTHR43707">
    <property type="entry name" value="HISTIDYL-TRNA SYNTHETASE"/>
    <property type="match status" value="1"/>
</dbReference>
<dbReference type="Pfam" id="PF03129">
    <property type="entry name" value="HGTP_anticodon"/>
    <property type="match status" value="1"/>
</dbReference>
<dbReference type="Pfam" id="PF13393">
    <property type="entry name" value="tRNA-synt_His"/>
    <property type="match status" value="1"/>
</dbReference>
<dbReference type="PIRSF" id="PIRSF001549">
    <property type="entry name" value="His-tRNA_synth"/>
    <property type="match status" value="1"/>
</dbReference>
<dbReference type="SUPFAM" id="SSF52954">
    <property type="entry name" value="Class II aaRS ABD-related"/>
    <property type="match status" value="1"/>
</dbReference>
<dbReference type="SUPFAM" id="SSF55681">
    <property type="entry name" value="Class II aaRS and biotin synthetases"/>
    <property type="match status" value="1"/>
</dbReference>
<dbReference type="PROSITE" id="PS50862">
    <property type="entry name" value="AA_TRNA_LIGASE_II"/>
    <property type="match status" value="1"/>
</dbReference>